<organism>
    <name type="scientific">Arabis hirsuta</name>
    <name type="common">Hairy rock-cress</name>
    <name type="synonym">Turritis hirsuta</name>
    <dbReference type="NCBI Taxonomy" id="78191"/>
    <lineage>
        <taxon>Eukaryota</taxon>
        <taxon>Viridiplantae</taxon>
        <taxon>Streptophyta</taxon>
        <taxon>Embryophyta</taxon>
        <taxon>Tracheophyta</taxon>
        <taxon>Spermatophyta</taxon>
        <taxon>Magnoliopsida</taxon>
        <taxon>eudicotyledons</taxon>
        <taxon>Gunneridae</taxon>
        <taxon>Pentapetalae</taxon>
        <taxon>rosids</taxon>
        <taxon>malvids</taxon>
        <taxon>Brassicales</taxon>
        <taxon>Brassicaceae</taxon>
        <taxon>Arabideae</taxon>
        <taxon>Arabis</taxon>
    </lineage>
</organism>
<keyword id="KW-0050">Antiport</keyword>
<keyword id="KW-0150">Chloroplast</keyword>
<keyword id="KW-0375">Hydrogen ion transport</keyword>
<keyword id="KW-0406">Ion transport</keyword>
<keyword id="KW-0472">Membrane</keyword>
<keyword id="KW-0934">Plastid</keyword>
<keyword id="KW-1001">Plastid inner membrane</keyword>
<keyword id="KW-0630">Potassium</keyword>
<keyword id="KW-0633">Potassium transport</keyword>
<keyword id="KW-0812">Transmembrane</keyword>
<keyword id="KW-1133">Transmembrane helix</keyword>
<keyword id="KW-0813">Transport</keyword>
<feature type="chain" id="PRO_0000293511" description="Potassium/proton antiporter CemA">
    <location>
        <begin position="1"/>
        <end position="229"/>
    </location>
</feature>
<feature type="transmembrane region" description="Helical" evidence="1">
    <location>
        <begin position="6"/>
        <end position="26"/>
    </location>
</feature>
<feature type="transmembrane region" description="Helical" evidence="1">
    <location>
        <begin position="107"/>
        <end position="127"/>
    </location>
</feature>
<feature type="transmembrane region" description="Helical" evidence="1">
    <location>
        <begin position="189"/>
        <end position="209"/>
    </location>
</feature>
<accession>A4QK30</accession>
<evidence type="ECO:0000255" key="1">
    <source>
        <dbReference type="HAMAP-Rule" id="MF_01308"/>
    </source>
</evidence>
<evidence type="ECO:0000305" key="2"/>
<reference key="1">
    <citation type="submission" date="2007-03" db="EMBL/GenBank/DDBJ databases">
        <title>Sequencing analysis of Arabis hirsuta chloroplast DNA.</title>
        <authorList>
            <person name="Hosouchi T."/>
            <person name="Tsuruoka H."/>
            <person name="Kotani H."/>
        </authorList>
    </citation>
    <scope>NUCLEOTIDE SEQUENCE [LARGE SCALE GENOMIC DNA]</scope>
</reference>
<sequence>MAKKKAFIPFFYFTSIVFLPWLISLCCNKSLKIWITNWWNTRQCETFLNDIQEKSVLEKFIQLEDLFQLDEMIKEYPETDLQQFRLGIHKETIQFIKIHNEYHIHTILHFSTNLISFVILSGYSFWGKEKLFILNSWVQEFLYNLSDTIKAFSILLLTDLCIGFHSPHGWELMIGYIYKDFGFAHYEQILSGLVSTFPVILDTIFKYWIFRYLNRVSPSLVVIYHAIND</sequence>
<protein>
    <recommendedName>
        <fullName evidence="1">Potassium/proton antiporter CemA</fullName>
    </recommendedName>
    <alternativeName>
        <fullName evidence="1">Chloroplast envelope membrane protein A</fullName>
        <shortName evidence="1">CemA</shortName>
    </alternativeName>
</protein>
<proteinExistence type="inferred from homology"/>
<geneLocation type="chloroplast"/>
<gene>
    <name evidence="1" type="primary">cemA</name>
    <name type="synonym">ycf10</name>
</gene>
<dbReference type="EMBL" id="AP009369">
    <property type="protein sequence ID" value="BAF50035.1"/>
    <property type="molecule type" value="Genomic_DNA"/>
</dbReference>
<dbReference type="RefSeq" id="YP_001123211.1">
    <property type="nucleotide sequence ID" value="NC_009268.1"/>
</dbReference>
<dbReference type="SMR" id="A4QK30"/>
<dbReference type="GeneID" id="4962574"/>
<dbReference type="GO" id="GO:0009706">
    <property type="term" value="C:chloroplast inner membrane"/>
    <property type="evidence" value="ECO:0007669"/>
    <property type="project" value="UniProtKB-SubCell"/>
</dbReference>
<dbReference type="GO" id="GO:0015297">
    <property type="term" value="F:antiporter activity"/>
    <property type="evidence" value="ECO:0007669"/>
    <property type="project" value="UniProtKB-KW"/>
</dbReference>
<dbReference type="GO" id="GO:0015078">
    <property type="term" value="F:proton transmembrane transporter activity"/>
    <property type="evidence" value="ECO:0007669"/>
    <property type="project" value="UniProtKB-UniRule"/>
</dbReference>
<dbReference type="GO" id="GO:0006813">
    <property type="term" value="P:potassium ion transport"/>
    <property type="evidence" value="ECO:0007669"/>
    <property type="project" value="UniProtKB-UniRule"/>
</dbReference>
<dbReference type="HAMAP" id="MF_01308">
    <property type="entry name" value="CemA_PxcA"/>
    <property type="match status" value="1"/>
</dbReference>
<dbReference type="InterPro" id="IPR004282">
    <property type="entry name" value="CemA"/>
</dbReference>
<dbReference type="PANTHER" id="PTHR33650:SF2">
    <property type="entry name" value="CHLOROPLAST ENVELOPE MEMBRANE PROTEIN"/>
    <property type="match status" value="1"/>
</dbReference>
<dbReference type="PANTHER" id="PTHR33650">
    <property type="entry name" value="CHLOROPLAST ENVELOPE MEMBRANE PROTEIN-RELATED"/>
    <property type="match status" value="1"/>
</dbReference>
<dbReference type="Pfam" id="PF03040">
    <property type="entry name" value="CemA"/>
    <property type="match status" value="1"/>
</dbReference>
<comment type="function">
    <text evidence="1">Contributes to K(+)/H(+) antiport activity by supporting proton efflux to control proton extrusion and homeostasis in chloroplasts in a light-dependent manner to modulate photosynthesis. Prevents excessive induction of non-photochemical quenching (NPQ) under continuous-light conditions. Indirectly promotes efficient inorganic carbon uptake into chloroplasts.</text>
</comment>
<comment type="catalytic activity">
    <reaction evidence="1">
        <text>K(+)(in) + H(+)(out) = K(+)(out) + H(+)(in)</text>
        <dbReference type="Rhea" id="RHEA:29467"/>
        <dbReference type="ChEBI" id="CHEBI:15378"/>
        <dbReference type="ChEBI" id="CHEBI:29103"/>
    </reaction>
</comment>
<comment type="subcellular location">
    <subcellularLocation>
        <location evidence="1">Plastid</location>
        <location evidence="1">Chloroplast inner membrane</location>
        <topology evidence="1">Multi-pass membrane protein</topology>
    </subcellularLocation>
</comment>
<comment type="similarity">
    <text evidence="1 2">Belongs to the CemA family.</text>
</comment>
<name>CEMA_ARAHI</name>